<dbReference type="EMBL" id="CP000031">
    <property type="protein sequence ID" value="AAV95746.1"/>
    <property type="molecule type" value="Genomic_DNA"/>
</dbReference>
<dbReference type="RefSeq" id="WP_011048203.1">
    <property type="nucleotide sequence ID" value="NC_003911.12"/>
</dbReference>
<dbReference type="SMR" id="Q5LQJ4"/>
<dbReference type="STRING" id="246200.SPO2495"/>
<dbReference type="PaxDb" id="246200-SPO2495"/>
<dbReference type="KEGG" id="sil:SPO2495"/>
<dbReference type="eggNOG" id="COG0776">
    <property type="taxonomic scope" value="Bacteria"/>
</dbReference>
<dbReference type="HOGENOM" id="CLU_105066_1_1_5"/>
<dbReference type="OrthoDB" id="9797747at2"/>
<dbReference type="Proteomes" id="UP000001023">
    <property type="component" value="Chromosome"/>
</dbReference>
<dbReference type="GO" id="GO:0005829">
    <property type="term" value="C:cytosol"/>
    <property type="evidence" value="ECO:0007669"/>
    <property type="project" value="TreeGrafter"/>
</dbReference>
<dbReference type="GO" id="GO:0003677">
    <property type="term" value="F:DNA binding"/>
    <property type="evidence" value="ECO:0007669"/>
    <property type="project" value="UniProtKB-UniRule"/>
</dbReference>
<dbReference type="GO" id="GO:0030527">
    <property type="term" value="F:structural constituent of chromatin"/>
    <property type="evidence" value="ECO:0007669"/>
    <property type="project" value="InterPro"/>
</dbReference>
<dbReference type="GO" id="GO:0006310">
    <property type="term" value="P:DNA recombination"/>
    <property type="evidence" value="ECO:0007669"/>
    <property type="project" value="UniProtKB-UniRule"/>
</dbReference>
<dbReference type="GO" id="GO:0009893">
    <property type="term" value="P:positive regulation of metabolic process"/>
    <property type="evidence" value="ECO:0007669"/>
    <property type="project" value="UniProtKB-ARBA"/>
</dbReference>
<dbReference type="GO" id="GO:0006355">
    <property type="term" value="P:regulation of DNA-templated transcription"/>
    <property type="evidence" value="ECO:0007669"/>
    <property type="project" value="UniProtKB-UniRule"/>
</dbReference>
<dbReference type="GO" id="GO:0006417">
    <property type="term" value="P:regulation of translation"/>
    <property type="evidence" value="ECO:0007669"/>
    <property type="project" value="UniProtKB-UniRule"/>
</dbReference>
<dbReference type="CDD" id="cd13835">
    <property type="entry name" value="IHF_A"/>
    <property type="match status" value="1"/>
</dbReference>
<dbReference type="Gene3D" id="4.10.520.10">
    <property type="entry name" value="IHF-like DNA-binding proteins"/>
    <property type="match status" value="1"/>
</dbReference>
<dbReference type="HAMAP" id="MF_00380">
    <property type="entry name" value="IHF_alpha"/>
    <property type="match status" value="1"/>
</dbReference>
<dbReference type="InterPro" id="IPR000119">
    <property type="entry name" value="Hist_DNA-bd"/>
</dbReference>
<dbReference type="InterPro" id="IPR020816">
    <property type="entry name" value="Histone-like_DNA-bd_CS"/>
</dbReference>
<dbReference type="InterPro" id="IPR010992">
    <property type="entry name" value="IHF-like_DNA-bd_dom_sf"/>
</dbReference>
<dbReference type="InterPro" id="IPR005684">
    <property type="entry name" value="IHF_alpha"/>
</dbReference>
<dbReference type="NCBIfam" id="TIGR00987">
    <property type="entry name" value="himA"/>
    <property type="match status" value="1"/>
</dbReference>
<dbReference type="NCBIfam" id="NF001401">
    <property type="entry name" value="PRK00285.1"/>
    <property type="match status" value="1"/>
</dbReference>
<dbReference type="PANTHER" id="PTHR33175">
    <property type="entry name" value="DNA-BINDING PROTEIN HU"/>
    <property type="match status" value="1"/>
</dbReference>
<dbReference type="PANTHER" id="PTHR33175:SF2">
    <property type="entry name" value="INTEGRATION HOST FACTOR SUBUNIT ALPHA"/>
    <property type="match status" value="1"/>
</dbReference>
<dbReference type="Pfam" id="PF00216">
    <property type="entry name" value="Bac_DNA_binding"/>
    <property type="match status" value="1"/>
</dbReference>
<dbReference type="PRINTS" id="PR01727">
    <property type="entry name" value="DNABINDINGHU"/>
</dbReference>
<dbReference type="SMART" id="SM00411">
    <property type="entry name" value="BHL"/>
    <property type="match status" value="1"/>
</dbReference>
<dbReference type="SUPFAM" id="SSF47729">
    <property type="entry name" value="IHF-like DNA-binding proteins"/>
    <property type="match status" value="1"/>
</dbReference>
<dbReference type="PROSITE" id="PS00045">
    <property type="entry name" value="HISTONE_LIKE"/>
    <property type="match status" value="1"/>
</dbReference>
<protein>
    <recommendedName>
        <fullName evidence="1">Integration host factor subunit alpha</fullName>
        <shortName evidence="1">IHF-alpha</shortName>
    </recommendedName>
</protein>
<feature type="chain" id="PRO_0000277782" description="Integration host factor subunit alpha">
    <location>
        <begin position="1"/>
        <end position="100"/>
    </location>
</feature>
<keyword id="KW-0233">DNA recombination</keyword>
<keyword id="KW-0238">DNA-binding</keyword>
<keyword id="KW-1185">Reference proteome</keyword>
<keyword id="KW-0804">Transcription</keyword>
<keyword id="KW-0805">Transcription regulation</keyword>
<keyword id="KW-0810">Translation regulation</keyword>
<organism>
    <name type="scientific">Ruegeria pomeroyi (strain ATCC 700808 / DSM 15171 / DSS-3)</name>
    <name type="common">Silicibacter pomeroyi</name>
    <dbReference type="NCBI Taxonomy" id="246200"/>
    <lineage>
        <taxon>Bacteria</taxon>
        <taxon>Pseudomonadati</taxon>
        <taxon>Pseudomonadota</taxon>
        <taxon>Alphaproteobacteria</taxon>
        <taxon>Rhodobacterales</taxon>
        <taxon>Roseobacteraceae</taxon>
        <taxon>Ruegeria</taxon>
    </lineage>
</organism>
<evidence type="ECO:0000255" key="1">
    <source>
        <dbReference type="HAMAP-Rule" id="MF_00380"/>
    </source>
</evidence>
<proteinExistence type="inferred from homology"/>
<name>IHFA_RUEPO</name>
<sequence>MSDKTLTRMDLSEAVFREVGLSRNESAQLVESMLNHMSDALVRGEQVKISSFGTFSVRDKSARVGRNPKTGEEVPIQPRRVLTFRPSHLMKERVAAGNRK</sequence>
<comment type="function">
    <text evidence="1">This protein is one of the two subunits of integration host factor, a specific DNA-binding protein that functions in genetic recombination as well as in transcriptional and translational control.</text>
</comment>
<comment type="subunit">
    <text evidence="1">Heterodimer of an alpha and a beta chain.</text>
</comment>
<comment type="similarity">
    <text evidence="1">Belongs to the bacterial histone-like protein family.</text>
</comment>
<gene>
    <name evidence="1" type="primary">ihfA</name>
    <name evidence="1" type="synonym">himA</name>
    <name type="ordered locus">SPO2495</name>
</gene>
<accession>Q5LQJ4</accession>
<reference key="1">
    <citation type="journal article" date="2004" name="Nature">
        <title>Genome sequence of Silicibacter pomeroyi reveals adaptations to the marine environment.</title>
        <authorList>
            <person name="Moran M.A."/>
            <person name="Buchan A."/>
            <person name="Gonzalez J.M."/>
            <person name="Heidelberg J.F."/>
            <person name="Whitman W.B."/>
            <person name="Kiene R.P."/>
            <person name="Henriksen J.R."/>
            <person name="King G.M."/>
            <person name="Belas R."/>
            <person name="Fuqua C."/>
            <person name="Brinkac L.M."/>
            <person name="Lewis M."/>
            <person name="Johri S."/>
            <person name="Weaver B."/>
            <person name="Pai G."/>
            <person name="Eisen J.A."/>
            <person name="Rahe E."/>
            <person name="Sheldon W.M."/>
            <person name="Ye W."/>
            <person name="Miller T.R."/>
            <person name="Carlton J."/>
            <person name="Rasko D.A."/>
            <person name="Paulsen I.T."/>
            <person name="Ren Q."/>
            <person name="Daugherty S.C."/>
            <person name="DeBoy R.T."/>
            <person name="Dodson R.J."/>
            <person name="Durkin A.S."/>
            <person name="Madupu R."/>
            <person name="Nelson W.C."/>
            <person name="Sullivan S.A."/>
            <person name="Rosovitz M.J."/>
            <person name="Haft D.H."/>
            <person name="Selengut J."/>
            <person name="Ward N."/>
        </authorList>
    </citation>
    <scope>NUCLEOTIDE SEQUENCE [LARGE SCALE GENOMIC DNA]</scope>
    <source>
        <strain>ATCC 700808 / DSM 15171 / DSS-3</strain>
    </source>
</reference>
<reference key="2">
    <citation type="journal article" date="2014" name="Stand. Genomic Sci.">
        <title>An updated genome annotation for the model marine bacterium Ruegeria pomeroyi DSS-3.</title>
        <authorList>
            <person name="Rivers A.R."/>
            <person name="Smith C.B."/>
            <person name="Moran M.A."/>
        </authorList>
    </citation>
    <scope>GENOME REANNOTATION</scope>
    <source>
        <strain>ATCC 700808 / DSM 15171 / DSS-3</strain>
    </source>
</reference>